<organismHost>
    <name type="scientific">Acanthamoeba polyphaga</name>
    <name type="common">Amoeba</name>
    <dbReference type="NCBI Taxonomy" id="5757"/>
</organismHost>
<evidence type="ECO:0000256" key="1">
    <source>
        <dbReference type="SAM" id="MobiDB-lite"/>
    </source>
</evidence>
<organism>
    <name type="scientific">Acanthamoeba polyphaga mimivirus</name>
    <name type="common">APMV</name>
    <dbReference type="NCBI Taxonomy" id="212035"/>
    <lineage>
        <taxon>Viruses</taxon>
        <taxon>Varidnaviria</taxon>
        <taxon>Bamfordvirae</taxon>
        <taxon>Nucleocytoviricota</taxon>
        <taxon>Megaviricetes</taxon>
        <taxon>Imitervirales</taxon>
        <taxon>Mimiviridae</taxon>
        <taxon>Megamimivirinae</taxon>
        <taxon>Mimivirus</taxon>
        <taxon>Mimivirus bradfordmassiliense</taxon>
    </lineage>
</organism>
<sequence length="300" mass="34738">MNIPSIYDDLMCQAISIERIKYWSTRDVVENPRKDEIRSQINTTGNEWIQNGINILDPLYNSVVKIFRKNHGSLTDRLISIVKSSVQLCKFRGVVDSIDSIEFCESVESINCISFQKYLEINKKLRIILVDILFSNAVMTTEGIENLFNEIDKLIKHLSDIKNRYKFQICGCDCDQQISKKRNFSEINYITPSCVEPKIIVQPPNIEFPINIPAKKPRLSQVQTIEQLPLRQSTSRQSISRQSISRQSTSRQSTAPEIIYVVREPDSIYTDFAYNKRQFGLRSYNPQEDSQILSQMVVIR</sequence>
<name>YL698_MIMIV</name>
<accession>Q5UNV7</accession>
<feature type="chain" id="PRO_0000071327" description="Uncharacterized protein L698">
    <location>
        <begin position="1"/>
        <end position="300"/>
    </location>
</feature>
<feature type="region of interest" description="Disordered" evidence="1">
    <location>
        <begin position="230"/>
        <end position="251"/>
    </location>
</feature>
<feature type="compositionally biased region" description="Low complexity" evidence="1">
    <location>
        <begin position="231"/>
        <end position="251"/>
    </location>
</feature>
<proteinExistence type="predicted"/>
<keyword id="KW-1185">Reference proteome</keyword>
<protein>
    <recommendedName>
        <fullName>Uncharacterized protein L698</fullName>
    </recommendedName>
</protein>
<gene>
    <name type="ordered locus">MIMI_L698</name>
</gene>
<reference key="1">
    <citation type="journal article" date="2004" name="Science">
        <title>The 1.2-megabase genome sequence of Mimivirus.</title>
        <authorList>
            <person name="Raoult D."/>
            <person name="Audic S."/>
            <person name="Robert C."/>
            <person name="Abergel C."/>
            <person name="Renesto P."/>
            <person name="Ogata H."/>
            <person name="La Scola B."/>
            <person name="Susan M."/>
            <person name="Claverie J.-M."/>
        </authorList>
    </citation>
    <scope>NUCLEOTIDE SEQUENCE [LARGE SCALE GENOMIC DNA]</scope>
    <source>
        <strain>Rowbotham-Bradford</strain>
    </source>
</reference>
<dbReference type="EMBL" id="AY653733">
    <property type="protein sequence ID" value="AAV50959.1"/>
    <property type="molecule type" value="Genomic_DNA"/>
</dbReference>
<dbReference type="SMR" id="Q5UNV7"/>
<dbReference type="KEGG" id="vg:9925351"/>
<dbReference type="Proteomes" id="UP000001134">
    <property type="component" value="Genome"/>
</dbReference>